<name>Y733_METJA</name>
<feature type="chain" id="PRO_0000107008" description="Uncharacterized protein MJ0733">
    <location>
        <begin position="1"/>
        <end position="121"/>
    </location>
</feature>
<sequence>MRWGFMKVAFLIFSYFHKNQPNMPVMMHTLLFANELKEKGDEVKIILEGEAVLWAKDLLSENHPLKSHFEKVKDDFVVCEACASMFNVKEEIKGKLKLENDLFGHVSLKKYLDGGYRIIEL</sequence>
<reference key="1">
    <citation type="journal article" date="1996" name="Science">
        <title>Complete genome sequence of the methanogenic archaeon, Methanococcus jannaschii.</title>
        <authorList>
            <person name="Bult C.J."/>
            <person name="White O."/>
            <person name="Olsen G.J."/>
            <person name="Zhou L."/>
            <person name="Fleischmann R.D."/>
            <person name="Sutton G.G."/>
            <person name="Blake J.A."/>
            <person name="FitzGerald L.M."/>
            <person name="Clayton R.A."/>
            <person name="Gocayne J.D."/>
            <person name="Kerlavage A.R."/>
            <person name="Dougherty B.A."/>
            <person name="Tomb J.-F."/>
            <person name="Adams M.D."/>
            <person name="Reich C.I."/>
            <person name="Overbeek R."/>
            <person name="Kirkness E.F."/>
            <person name="Weinstock K.G."/>
            <person name="Merrick J.M."/>
            <person name="Glodek A."/>
            <person name="Scott J.L."/>
            <person name="Geoghagen N.S.M."/>
            <person name="Weidman J.F."/>
            <person name="Fuhrmann J.L."/>
            <person name="Nguyen D."/>
            <person name="Utterback T.R."/>
            <person name="Kelley J.M."/>
            <person name="Peterson J.D."/>
            <person name="Sadow P.W."/>
            <person name="Hanna M.C."/>
            <person name="Cotton M.D."/>
            <person name="Roberts K.M."/>
            <person name="Hurst M.A."/>
            <person name="Kaine B.P."/>
            <person name="Borodovsky M."/>
            <person name="Klenk H.-P."/>
            <person name="Fraser C.M."/>
            <person name="Smith H.O."/>
            <person name="Woese C.R."/>
            <person name="Venter J.C."/>
        </authorList>
    </citation>
    <scope>NUCLEOTIDE SEQUENCE [LARGE SCALE GENOMIC DNA]</scope>
    <source>
        <strain>ATCC 43067 / DSM 2661 / JAL-1 / JCM 10045 / NBRC 100440</strain>
    </source>
</reference>
<organism>
    <name type="scientific">Methanocaldococcus jannaschii (strain ATCC 43067 / DSM 2661 / JAL-1 / JCM 10045 / NBRC 100440)</name>
    <name type="common">Methanococcus jannaschii</name>
    <dbReference type="NCBI Taxonomy" id="243232"/>
    <lineage>
        <taxon>Archaea</taxon>
        <taxon>Methanobacteriati</taxon>
        <taxon>Methanobacteriota</taxon>
        <taxon>Methanomada group</taxon>
        <taxon>Methanococci</taxon>
        <taxon>Methanococcales</taxon>
        <taxon>Methanocaldococcaceae</taxon>
        <taxon>Methanocaldococcus</taxon>
    </lineage>
</organism>
<protein>
    <recommendedName>
        <fullName>Uncharacterized protein MJ0733</fullName>
    </recommendedName>
</protein>
<proteinExistence type="predicted"/>
<accession>Q58143</accession>
<dbReference type="EMBL" id="L77117">
    <property type="protein sequence ID" value="AAB98743.1"/>
    <property type="molecule type" value="Genomic_DNA"/>
</dbReference>
<dbReference type="PIR" id="E64391">
    <property type="entry name" value="E64391"/>
</dbReference>
<dbReference type="SMR" id="Q58143"/>
<dbReference type="STRING" id="243232.MJ_0733"/>
<dbReference type="PaxDb" id="243232-MJ_0733"/>
<dbReference type="EnsemblBacteria" id="AAB98743">
    <property type="protein sequence ID" value="AAB98743"/>
    <property type="gene ID" value="MJ_0733"/>
</dbReference>
<dbReference type="KEGG" id="mja:MJ_0733"/>
<dbReference type="eggNOG" id="arCOG01670">
    <property type="taxonomic scope" value="Archaea"/>
</dbReference>
<dbReference type="HOGENOM" id="CLU_167520_0_0_2"/>
<dbReference type="InParanoid" id="Q58143"/>
<dbReference type="Proteomes" id="UP000000805">
    <property type="component" value="Chromosome"/>
</dbReference>
<dbReference type="Gene3D" id="3.40.1260.10">
    <property type="entry name" value="DsrEFH-like"/>
    <property type="match status" value="1"/>
</dbReference>
<dbReference type="InterPro" id="IPR027396">
    <property type="entry name" value="DsrEFH-like"/>
</dbReference>
<dbReference type="InterPro" id="IPR003787">
    <property type="entry name" value="Sulphur_relay_DsrE/F-like"/>
</dbReference>
<dbReference type="Pfam" id="PF02635">
    <property type="entry name" value="DsrE"/>
    <property type="match status" value="1"/>
</dbReference>
<dbReference type="SUPFAM" id="SSF75169">
    <property type="entry name" value="DsrEFH-like"/>
    <property type="match status" value="1"/>
</dbReference>
<keyword id="KW-1185">Reference proteome</keyword>
<gene>
    <name type="ordered locus">MJ0733</name>
</gene>